<organism>
    <name type="scientific">Escherichia coli O45:K1 (strain S88 / ExPEC)</name>
    <dbReference type="NCBI Taxonomy" id="585035"/>
    <lineage>
        <taxon>Bacteria</taxon>
        <taxon>Pseudomonadati</taxon>
        <taxon>Pseudomonadota</taxon>
        <taxon>Gammaproteobacteria</taxon>
        <taxon>Enterobacterales</taxon>
        <taxon>Enterobacteriaceae</taxon>
        <taxon>Escherichia</taxon>
    </lineage>
</organism>
<name>EMTA_ECO45</name>
<keyword id="KW-0998">Cell outer membrane</keyword>
<keyword id="KW-0961">Cell wall biogenesis/degradation</keyword>
<keyword id="KW-0449">Lipoprotein</keyword>
<keyword id="KW-0456">Lyase</keyword>
<keyword id="KW-0472">Membrane</keyword>
<keyword id="KW-0564">Palmitate</keyword>
<keyword id="KW-1185">Reference proteome</keyword>
<keyword id="KW-0732">Signal</keyword>
<dbReference type="EC" id="4.2.2.n2" evidence="1"/>
<dbReference type="EMBL" id="CU928161">
    <property type="protein sequence ID" value="CAR02582.1"/>
    <property type="molecule type" value="Genomic_DNA"/>
</dbReference>
<dbReference type="RefSeq" id="WP_001295994.1">
    <property type="nucleotide sequence ID" value="NC_011742.1"/>
</dbReference>
<dbReference type="SMR" id="B7MK90"/>
<dbReference type="CAZy" id="GH23">
    <property type="family name" value="Glycoside Hydrolase Family 23"/>
</dbReference>
<dbReference type="KEGG" id="ecz:ECS88_1256"/>
<dbReference type="HOGENOM" id="CLU_103257_0_0_6"/>
<dbReference type="Proteomes" id="UP000000747">
    <property type="component" value="Chromosome"/>
</dbReference>
<dbReference type="GO" id="GO:0009279">
    <property type="term" value="C:cell outer membrane"/>
    <property type="evidence" value="ECO:0007669"/>
    <property type="project" value="UniProtKB-SubCell"/>
</dbReference>
<dbReference type="GO" id="GO:0008932">
    <property type="term" value="F:lytic endotransglycosylase activity"/>
    <property type="evidence" value="ECO:0007669"/>
    <property type="project" value="InterPro"/>
</dbReference>
<dbReference type="GO" id="GO:0016998">
    <property type="term" value="P:cell wall macromolecule catabolic process"/>
    <property type="evidence" value="ECO:0007669"/>
    <property type="project" value="UniProtKB-UniRule"/>
</dbReference>
<dbReference type="GO" id="GO:0071555">
    <property type="term" value="P:cell wall organization"/>
    <property type="evidence" value="ECO:0007669"/>
    <property type="project" value="UniProtKB-KW"/>
</dbReference>
<dbReference type="GO" id="GO:0000270">
    <property type="term" value="P:peptidoglycan metabolic process"/>
    <property type="evidence" value="ECO:0007669"/>
    <property type="project" value="InterPro"/>
</dbReference>
<dbReference type="CDD" id="cd16893">
    <property type="entry name" value="LT_MltC_MltE"/>
    <property type="match status" value="1"/>
</dbReference>
<dbReference type="FunFam" id="1.10.530.10:FF:000007">
    <property type="entry name" value="Endo-type membrane-bound lytic murein transglycosylase A"/>
    <property type="match status" value="1"/>
</dbReference>
<dbReference type="Gene3D" id="1.10.530.10">
    <property type="match status" value="1"/>
</dbReference>
<dbReference type="HAMAP" id="MF_01381">
    <property type="entry name" value="EmtA"/>
    <property type="match status" value="1"/>
</dbReference>
<dbReference type="InterPro" id="IPR023946">
    <property type="entry name" value="EmtA"/>
</dbReference>
<dbReference type="InterPro" id="IPR023346">
    <property type="entry name" value="Lysozyme-like_dom_sf"/>
</dbReference>
<dbReference type="InterPro" id="IPR000189">
    <property type="entry name" value="Transglyc_AS"/>
</dbReference>
<dbReference type="InterPro" id="IPR008258">
    <property type="entry name" value="Transglycosylase_SLT_dom_1"/>
</dbReference>
<dbReference type="NCBIfam" id="NF012014">
    <property type="entry name" value="PRK15470.1"/>
    <property type="match status" value="1"/>
</dbReference>
<dbReference type="PANTHER" id="PTHR37423:SF4">
    <property type="entry name" value="ENDO-TYPE MEMBRANE-BOUND LYTIC MUREIN TRANSGLYCOSYLASE A"/>
    <property type="match status" value="1"/>
</dbReference>
<dbReference type="PANTHER" id="PTHR37423">
    <property type="entry name" value="SOLUBLE LYTIC MUREIN TRANSGLYCOSYLASE-RELATED"/>
    <property type="match status" value="1"/>
</dbReference>
<dbReference type="Pfam" id="PF01464">
    <property type="entry name" value="SLT"/>
    <property type="match status" value="1"/>
</dbReference>
<dbReference type="SUPFAM" id="SSF53955">
    <property type="entry name" value="Lysozyme-like"/>
    <property type="match status" value="1"/>
</dbReference>
<dbReference type="PROSITE" id="PS51257">
    <property type="entry name" value="PROKAR_LIPOPROTEIN"/>
    <property type="match status" value="1"/>
</dbReference>
<dbReference type="PROSITE" id="PS00922">
    <property type="entry name" value="TRANSGLYCOSYLASE"/>
    <property type="match status" value="1"/>
</dbReference>
<comment type="function">
    <text evidence="1">Murein-degrading enzyme. May play a role in recycling of muropeptides during cell elongation and/or cell division. Preferentially cleaves at a distance of more than two disaccharide units from the ends of the glycan chain.</text>
</comment>
<comment type="catalytic activity">
    <reaction evidence="1">
        <text>Endolytic cleavage of the (1-&gt;4)-beta-glycosidic linkage between N-acetylmuramic acid (MurNAc) and N-acetylglucosamine (GlcNAc) residues in peptidoglycan with concomitant formation of a 1,6-anhydrobond in the MurNAc residue.</text>
        <dbReference type="EC" id="4.2.2.n2"/>
    </reaction>
</comment>
<comment type="subcellular location">
    <subcellularLocation>
        <location evidence="1">Cell outer membrane</location>
        <topology evidence="1">Lipid-anchor</topology>
    </subcellularLocation>
</comment>
<comment type="similarity">
    <text evidence="1">Belongs to the transglycosylase Slt family.</text>
</comment>
<reference key="1">
    <citation type="journal article" date="2009" name="PLoS Genet.">
        <title>Organised genome dynamics in the Escherichia coli species results in highly diverse adaptive paths.</title>
        <authorList>
            <person name="Touchon M."/>
            <person name="Hoede C."/>
            <person name="Tenaillon O."/>
            <person name="Barbe V."/>
            <person name="Baeriswyl S."/>
            <person name="Bidet P."/>
            <person name="Bingen E."/>
            <person name="Bonacorsi S."/>
            <person name="Bouchier C."/>
            <person name="Bouvet O."/>
            <person name="Calteau A."/>
            <person name="Chiapello H."/>
            <person name="Clermont O."/>
            <person name="Cruveiller S."/>
            <person name="Danchin A."/>
            <person name="Diard M."/>
            <person name="Dossat C."/>
            <person name="Karoui M.E."/>
            <person name="Frapy E."/>
            <person name="Garry L."/>
            <person name="Ghigo J.M."/>
            <person name="Gilles A.M."/>
            <person name="Johnson J."/>
            <person name="Le Bouguenec C."/>
            <person name="Lescat M."/>
            <person name="Mangenot S."/>
            <person name="Martinez-Jehanne V."/>
            <person name="Matic I."/>
            <person name="Nassif X."/>
            <person name="Oztas S."/>
            <person name="Petit M.A."/>
            <person name="Pichon C."/>
            <person name="Rouy Z."/>
            <person name="Ruf C.S."/>
            <person name="Schneider D."/>
            <person name="Tourret J."/>
            <person name="Vacherie B."/>
            <person name="Vallenet D."/>
            <person name="Medigue C."/>
            <person name="Rocha E.P.C."/>
            <person name="Denamur E."/>
        </authorList>
    </citation>
    <scope>NUCLEOTIDE SEQUENCE [LARGE SCALE GENOMIC DNA]</scope>
    <source>
        <strain>S88 / ExPEC</strain>
    </source>
</reference>
<evidence type="ECO:0000255" key="1">
    <source>
        <dbReference type="HAMAP-Rule" id="MF_01381"/>
    </source>
</evidence>
<gene>
    <name evidence="1" type="primary">emtA</name>
    <name type="ordered locus">ECS88_1256</name>
</gene>
<accession>B7MK90</accession>
<feature type="signal peptide" evidence="1">
    <location>
        <begin position="1"/>
        <end position="15"/>
    </location>
</feature>
<feature type="chain" id="PRO_1000144949" description="Endo-type membrane-bound lytic murein transglycosylase A">
    <location>
        <begin position="16"/>
        <end position="203"/>
    </location>
</feature>
<feature type="lipid moiety-binding region" description="N-palmitoyl cysteine" evidence="1">
    <location>
        <position position="16"/>
    </location>
</feature>
<feature type="lipid moiety-binding region" description="S-diacylglycerol cysteine" evidence="1">
    <location>
        <position position="16"/>
    </location>
</feature>
<proteinExistence type="inferred from homology"/>
<protein>
    <recommendedName>
        <fullName evidence="1">Endo-type membrane-bound lytic murein transglycosylase A</fullName>
        <ecNumber evidence="1">4.2.2.n2</ecNumber>
    </recommendedName>
    <alternativeName>
        <fullName evidence="1">Peptidoglycan lytic endotransglycosylase</fullName>
    </alternativeName>
</protein>
<sequence length="203" mass="22213">MKLRWFAFLIVLLAGCSSKHDYTNPPWNAKVPVQRAMQWMPISQKAGAAWGVDPQLITAIIAIESGGNPNAVSKSNAIGLMQIKASTSGRDVYRRMGWSGEPTTSELKNPERNISMGAAYLNILETGPLAGIEDPKVLQYALVVSYANGAGALLRTFSSDRKKAISKINDLDADEFLDHVARNHPAPQAPRYIYKLEQALDAM</sequence>